<proteinExistence type="evidence at transcript level"/>
<gene>
    <name evidence="3" type="primary">imqC</name>
    <name type="ORF">AFLA_064250</name>
</gene>
<dbReference type="EC" id="1.-.-.-" evidence="5"/>
<dbReference type="EMBL" id="EQ963479">
    <property type="protein sequence ID" value="EED49604.1"/>
    <property type="molecule type" value="Genomic_DNA"/>
</dbReference>
<dbReference type="RefSeq" id="XP_002379985.1">
    <property type="nucleotide sequence ID" value="XM_002379944.1"/>
</dbReference>
<dbReference type="SMR" id="B8NI20"/>
<dbReference type="STRING" id="332952.B8NI20"/>
<dbReference type="EnsemblFungi" id="EED49604">
    <property type="protein sequence ID" value="EED49604"/>
    <property type="gene ID" value="AFLA_064250"/>
</dbReference>
<dbReference type="VEuPathDB" id="FungiDB:AFLA_008359"/>
<dbReference type="eggNOG" id="KOG3855">
    <property type="taxonomic scope" value="Eukaryota"/>
</dbReference>
<dbReference type="HOGENOM" id="CLU_1239882_0_0_1"/>
<dbReference type="OMA" id="CLEVIRC"/>
<dbReference type="GO" id="GO:0071949">
    <property type="term" value="F:FAD binding"/>
    <property type="evidence" value="ECO:0007669"/>
    <property type="project" value="InterPro"/>
</dbReference>
<dbReference type="GO" id="GO:0016709">
    <property type="term" value="F:oxidoreductase activity, acting on paired donors, with incorporation or reduction of molecular oxygen, NAD(P)H as one donor, and incorporation of one atom of oxygen"/>
    <property type="evidence" value="ECO:0007669"/>
    <property type="project" value="UniProtKB-ARBA"/>
</dbReference>
<dbReference type="Gene3D" id="3.30.9.10">
    <property type="entry name" value="D-Amino Acid Oxidase, subunit A, domain 2"/>
    <property type="match status" value="1"/>
</dbReference>
<dbReference type="Gene3D" id="3.50.50.60">
    <property type="entry name" value="FAD/NAD(P)-binding domain"/>
    <property type="match status" value="1"/>
</dbReference>
<dbReference type="InterPro" id="IPR002938">
    <property type="entry name" value="FAD-bd"/>
</dbReference>
<dbReference type="InterPro" id="IPR036188">
    <property type="entry name" value="FAD/NAD-bd_sf"/>
</dbReference>
<dbReference type="InterPro" id="IPR050641">
    <property type="entry name" value="RIFMO-like"/>
</dbReference>
<dbReference type="PANTHER" id="PTHR43004:SF16">
    <property type="entry name" value="PHENOL 2-MONOOXYGENASE FSQG"/>
    <property type="match status" value="1"/>
</dbReference>
<dbReference type="PANTHER" id="PTHR43004">
    <property type="entry name" value="TRK SYSTEM POTASSIUM UPTAKE PROTEIN"/>
    <property type="match status" value="1"/>
</dbReference>
<dbReference type="Pfam" id="PF01494">
    <property type="entry name" value="FAD_binding_3"/>
    <property type="match status" value="1"/>
</dbReference>
<dbReference type="PRINTS" id="PR00420">
    <property type="entry name" value="RNGMNOXGNASE"/>
</dbReference>
<dbReference type="SUPFAM" id="SSF54373">
    <property type="entry name" value="FAD-linked reductases, C-terminal domain"/>
    <property type="match status" value="1"/>
</dbReference>
<dbReference type="SUPFAM" id="SSF51905">
    <property type="entry name" value="FAD/NAD(P)-binding domain"/>
    <property type="match status" value="1"/>
</dbReference>
<feature type="chain" id="PRO_0000444551" description="FAD-dependent monooxygenase imqC">
    <location>
        <begin position="1"/>
        <end position="223"/>
    </location>
</feature>
<feature type="binding site" evidence="1">
    <location>
        <begin position="139"/>
        <end position="141"/>
    </location>
    <ligand>
        <name>FAD</name>
        <dbReference type="ChEBI" id="CHEBI:57692"/>
    </ligand>
</feature>
<feature type="binding site" evidence="1">
    <location>
        <position position="189"/>
    </location>
    <ligand>
        <name>FAD</name>
        <dbReference type="ChEBI" id="CHEBI:57692"/>
    </ligand>
</feature>
<feature type="binding site" evidence="1">
    <location>
        <position position="210"/>
    </location>
    <ligand>
        <name>FAD</name>
        <dbReference type="ChEBI" id="CHEBI:57692"/>
    </ligand>
</feature>
<comment type="function">
    <text evidence="2">FAD-dependent monooxygenase; part of the gene cluster that mediates the biosynthesis of imizoquins A to D, tripeptide-derived alkaloids that serve a protective role against oxidative stress that are essential for normal germination (PubMed:29182847). ImqB is a canonical three-module NRPS that assembles the tripeptide backbone of the imizoquins via condensation of Trp, Tyr, and Leu-derived precursors (PubMed:29182847). N-methylation by imqF and phenol oxidation by imqC, followed by cyclization via the FAD-dependent oxidase imqH carry out the three-step transformation of L-tyrosine into tetrahydroisoquinoline (PubMed:29182847). Importantly, this sequence requires the presence of a free amine in the tyrosine moiety, indicating that isoquinoline formation occurs prior to peptide bond formation (PubMed:29182847). The imidazolidin-4-one ring of imizoquins could form following additional oxidation of the methyl-derived bridgehead carbon by imqH (PubMed:29182847). Lastly, O-methylation by imqG and leucine hydroxylation by imqE complete biosynthesis of the imizoquins (PubMed:29182847).</text>
</comment>
<comment type="pathway">
    <text evidence="5">Secondary metabolite biosynthesis.</text>
</comment>
<comment type="induction">
    <text evidence="2">Expression is down-regulated by ralstonins, lipopeptides produced by the plant pathogenic bacteria Ralstonia solanacearum (PubMed:29182847). Expression is positively regulated by the imizoquins cluster-specific transcription regulator imqK (PubMed:29182847).</text>
</comment>
<comment type="similarity">
    <text evidence="4">Belongs to the PheA/TfdB FAD monooxygenase family.</text>
</comment>
<accession>B8NI20</accession>
<evidence type="ECO:0000250" key="1">
    <source>
        <dbReference type="UniProtKB" id="Q6SSJ6"/>
    </source>
</evidence>
<evidence type="ECO:0000269" key="2">
    <source>
    </source>
</evidence>
<evidence type="ECO:0000303" key="3">
    <source>
    </source>
</evidence>
<evidence type="ECO:0000305" key="4"/>
<evidence type="ECO:0000305" key="5">
    <source>
    </source>
</evidence>
<organism>
    <name type="scientific">Aspergillus flavus (strain ATCC 200026 / FGSC A1120 / IAM 13836 / NRRL 3357 / JCM 12722 / SRRC 167)</name>
    <dbReference type="NCBI Taxonomy" id="332952"/>
    <lineage>
        <taxon>Eukaryota</taxon>
        <taxon>Fungi</taxon>
        <taxon>Dikarya</taxon>
        <taxon>Ascomycota</taxon>
        <taxon>Pezizomycotina</taxon>
        <taxon>Eurotiomycetes</taxon>
        <taxon>Eurotiomycetidae</taxon>
        <taxon>Eurotiales</taxon>
        <taxon>Aspergillaceae</taxon>
        <taxon>Aspergillus</taxon>
        <taxon>Aspergillus subgen. Circumdati</taxon>
    </lineage>
</organism>
<keyword id="KW-0274">FAD</keyword>
<keyword id="KW-0285">Flavoprotein</keyword>
<keyword id="KW-0503">Monooxygenase</keyword>
<keyword id="KW-0560">Oxidoreductase</keyword>
<name>IMQC_ASPFN</name>
<sequence>MIENLRKRSTIEVEWRKQPVHMDIDLDQVDNPEAYPITVSVETSKDGSDPGLLWQPMHAERDSIVKETIHAKYVLGCDGARSWIRQRLGVSFIGDLTDSTWGVMDIVPKTSFPDIRKVAVIHSSKGTVMSVPREDKLVRFYIQIDAVNPNAASGLARRDLKVEDLLDAARAIMFPYTMEAAECAWWSAYRVGQRVANEFARHDRIFLAGDSVREYCLEVIRCQ</sequence>
<reference key="1">
    <citation type="journal article" date="2015" name="Genome Announc.">
        <title>Genome sequence of Aspergillus flavus NRRL 3357, a strain that causes aflatoxin contamination of food and feed.</title>
        <authorList>
            <person name="Nierman W.C."/>
            <person name="Yu J."/>
            <person name="Fedorova-Abrams N.D."/>
            <person name="Losada L."/>
            <person name="Cleveland T.E."/>
            <person name="Bhatnagar D."/>
            <person name="Bennett J.W."/>
            <person name="Dean R."/>
            <person name="Payne G.A."/>
        </authorList>
    </citation>
    <scope>NUCLEOTIDE SEQUENCE [LARGE SCALE GENOMIC DNA]</scope>
    <source>
        <strain>ATCC 200026 / FGSC A1120 / IAM 13836 / NRRL 3357 / JCM 12722 / SRRC 167</strain>
    </source>
</reference>
<reference key="2">
    <citation type="journal article" date="2018" name="ACS Chem. Biol.">
        <title>NRPS-derived isoquinolines and lipopetides mediate antagonism between plant pathogenic fungi and bacteria.</title>
        <authorList>
            <person name="Khalid S."/>
            <person name="Baccile J.A."/>
            <person name="Spraker J.E."/>
            <person name="Tannous J."/>
            <person name="Imran M."/>
            <person name="Schroeder F.C."/>
            <person name="Keller N.P."/>
        </authorList>
    </citation>
    <scope>INDUCTION</scope>
    <scope>FUNCTION</scope>
    <scope>PATHWAY</scope>
</reference>
<protein>
    <recommendedName>
        <fullName evidence="3">FAD-dependent monooxygenase imqC</fullName>
        <ecNumber evidence="5">1.-.-.-</ecNumber>
    </recommendedName>
    <alternativeName>
        <fullName evidence="3">Imizoquin biosynthesis cluster protein C</fullName>
    </alternativeName>
</protein>